<sequence>MNIDDKLEGLFLKCGGIDEMQSSRAMVVMGGVSGQSAVSGELQESVLQDRSLPHQEILAADEVLQESEMRQQDMISHDELMVHEETVKNDEEQTDTHERLPQGLQYALNVPISVKQEITFTDVSEQLMRDKKQVREPVDLQKKKKRKQRSPAKILTINEDGSLGLKTPKSHVCEHCNAAFRTNYHLQRHVFIHTGEKPFQCSQCDMRFIQKYLLQRHEKIHTGEKPFRCDECGMRFIQKYHMERHKRTHSGEKPYQCEYCLQYFSRTDRVLKHKRMCHENHDKKLNRCAIKGGLLTSEEDSGFSTSPKDNSLPKKKRQKPEKKSSGMDKESVLDKSDTKKDRNDYLPLYSSSTKVKDEYMVAEYAVEMPHSSVGGSHLEDASGEIHPPKLVLKKINSKRSLKQPLEQSQTISPLSTYEDSKVSKYAFELVDKQALLDSEGSADIDQVDNLQEGPSKPVHSSTNYDDAMQFLKKKRYLQAASNNSREYALNVGTIASQPSVTQAAVASVIDENTTASILDSQALNVEIKSNHDKNVIPDEVLQTLLDHYSHKANGQHEISFSVADTEVTSSISINSSDVPEVTQSENVGSSSQASSSDKANMLQEYSKFLQQALDRTSQNDAYLNSPSLNFVTDNQTLPNPPAFSSIDKQVYAAMPINSFRSGMNSPLRTTPDKSHFGLIVGDSQHPFPFSGDETNHASATSTADFLDQVTSQKKAEAQPVHQAYQMSSFEQPFRAPYHGSRAGIATQFSTANGQVNLRGPGTSAEFSEFPLVNVNDNRAGMTSSPDATTGQTFG</sequence>
<dbReference type="EMBL" id="U30381">
    <property type="protein sequence ID" value="AAC52958.1"/>
    <property type="molecule type" value="mRNA"/>
</dbReference>
<dbReference type="RefSeq" id="NP_113803.1">
    <property type="nucleotide sequence ID" value="NM_031615.2"/>
</dbReference>
<dbReference type="SMR" id="Q62806"/>
<dbReference type="FunCoup" id="Q62806">
    <property type="interactions" value="3623"/>
</dbReference>
<dbReference type="STRING" id="10116.ENSRNOP00000071067"/>
<dbReference type="CarbonylDB" id="Q62806"/>
<dbReference type="iPTMnet" id="Q62806"/>
<dbReference type="PhosphoSitePlus" id="Q62806"/>
<dbReference type="jPOST" id="Q62806"/>
<dbReference type="PaxDb" id="10116-ENSRNOP00000002435"/>
<dbReference type="GeneID" id="58820"/>
<dbReference type="KEGG" id="rno:58820"/>
<dbReference type="UCSC" id="RGD:62063">
    <property type="organism name" value="rat"/>
</dbReference>
<dbReference type="AGR" id="RGD:62063"/>
<dbReference type="CTD" id="22661"/>
<dbReference type="RGD" id="62063">
    <property type="gene designation" value="Zfp148"/>
</dbReference>
<dbReference type="VEuPathDB" id="HostDB:ENSRNOG00000001789"/>
<dbReference type="eggNOG" id="KOG1721">
    <property type="taxonomic scope" value="Eukaryota"/>
</dbReference>
<dbReference type="InParanoid" id="Q62806"/>
<dbReference type="OrthoDB" id="8117402at2759"/>
<dbReference type="PhylomeDB" id="Q62806"/>
<dbReference type="TreeFam" id="TF331779"/>
<dbReference type="PRO" id="PR:Q62806"/>
<dbReference type="Proteomes" id="UP000002494">
    <property type="component" value="Chromosome 11"/>
</dbReference>
<dbReference type="Bgee" id="ENSRNOG00000001789">
    <property type="expression patterns" value="Expressed in Ammon's horn and 19 other cell types or tissues"/>
</dbReference>
<dbReference type="GO" id="GO:0005634">
    <property type="term" value="C:nucleus"/>
    <property type="evidence" value="ECO:0000266"/>
    <property type="project" value="RGD"/>
</dbReference>
<dbReference type="GO" id="GO:0003700">
    <property type="term" value="F:DNA-binding transcription factor activity"/>
    <property type="evidence" value="ECO:0000266"/>
    <property type="project" value="RGD"/>
</dbReference>
<dbReference type="GO" id="GO:0001227">
    <property type="term" value="F:DNA-binding transcription repressor activity, RNA polymerase II-specific"/>
    <property type="evidence" value="ECO:0000266"/>
    <property type="project" value="RGD"/>
</dbReference>
<dbReference type="GO" id="GO:0003690">
    <property type="term" value="F:double-stranded DNA binding"/>
    <property type="evidence" value="ECO:0000314"/>
    <property type="project" value="RGD"/>
</dbReference>
<dbReference type="GO" id="GO:0000978">
    <property type="term" value="F:RNA polymerase II cis-regulatory region sequence-specific DNA binding"/>
    <property type="evidence" value="ECO:0000266"/>
    <property type="project" value="RGD"/>
</dbReference>
<dbReference type="GO" id="GO:0043565">
    <property type="term" value="F:sequence-specific DNA binding"/>
    <property type="evidence" value="ECO:0000266"/>
    <property type="project" value="RGD"/>
</dbReference>
<dbReference type="GO" id="GO:0000976">
    <property type="term" value="F:transcription cis-regulatory region binding"/>
    <property type="evidence" value="ECO:0000314"/>
    <property type="project" value="RGD"/>
</dbReference>
<dbReference type="GO" id="GO:0008270">
    <property type="term" value="F:zinc ion binding"/>
    <property type="evidence" value="ECO:0007669"/>
    <property type="project" value="UniProtKB-KW"/>
</dbReference>
<dbReference type="GO" id="GO:0007276">
    <property type="term" value="P:gamete generation"/>
    <property type="evidence" value="ECO:0000266"/>
    <property type="project" value="RGD"/>
</dbReference>
<dbReference type="GO" id="GO:0045892">
    <property type="term" value="P:negative regulation of DNA-templated transcription"/>
    <property type="evidence" value="ECO:0000266"/>
    <property type="project" value="RGD"/>
</dbReference>
<dbReference type="GO" id="GO:0010629">
    <property type="term" value="P:negative regulation of gene expression"/>
    <property type="evidence" value="ECO:0000266"/>
    <property type="project" value="RGD"/>
</dbReference>
<dbReference type="GO" id="GO:0000122">
    <property type="term" value="P:negative regulation of transcription by RNA polymerase II"/>
    <property type="evidence" value="ECO:0000314"/>
    <property type="project" value="RGD"/>
</dbReference>
<dbReference type="GO" id="GO:0045944">
    <property type="term" value="P:positive regulation of transcription by RNA polymerase II"/>
    <property type="evidence" value="ECO:0000266"/>
    <property type="project" value="RGD"/>
</dbReference>
<dbReference type="GO" id="GO:0065003">
    <property type="term" value="P:protein-containing complex assembly"/>
    <property type="evidence" value="ECO:0000315"/>
    <property type="project" value="RGD"/>
</dbReference>
<dbReference type="GO" id="GO:0006357">
    <property type="term" value="P:regulation of transcription by RNA polymerase II"/>
    <property type="evidence" value="ECO:0000318"/>
    <property type="project" value="GO_Central"/>
</dbReference>
<dbReference type="FunFam" id="3.30.160.60:FF:004830">
    <property type="match status" value="1"/>
</dbReference>
<dbReference type="FunFam" id="3.30.160.60:FF:000067">
    <property type="entry name" value="Vascular endothelial zinc finger 1"/>
    <property type="match status" value="1"/>
</dbReference>
<dbReference type="FunFam" id="3.30.160.60:FF:000042">
    <property type="entry name" value="Zinc finger protein 148"/>
    <property type="match status" value="2"/>
</dbReference>
<dbReference type="Gene3D" id="3.30.160.60">
    <property type="entry name" value="Classic Zinc Finger"/>
    <property type="match status" value="4"/>
</dbReference>
<dbReference type="InterPro" id="IPR036236">
    <property type="entry name" value="Znf_C2H2_sf"/>
</dbReference>
<dbReference type="InterPro" id="IPR013087">
    <property type="entry name" value="Znf_C2H2_type"/>
</dbReference>
<dbReference type="PANTHER" id="PTHR23235:SF155">
    <property type="entry name" value="EARLY GROWTH RESPONSE 4-RELATED"/>
    <property type="match status" value="1"/>
</dbReference>
<dbReference type="PANTHER" id="PTHR23235">
    <property type="entry name" value="KRUEPPEL-LIKE TRANSCRIPTION FACTOR"/>
    <property type="match status" value="1"/>
</dbReference>
<dbReference type="Pfam" id="PF00096">
    <property type="entry name" value="zf-C2H2"/>
    <property type="match status" value="3"/>
</dbReference>
<dbReference type="SMART" id="SM00355">
    <property type="entry name" value="ZnF_C2H2"/>
    <property type="match status" value="4"/>
</dbReference>
<dbReference type="SUPFAM" id="SSF57667">
    <property type="entry name" value="beta-beta-alpha zinc fingers"/>
    <property type="match status" value="2"/>
</dbReference>
<dbReference type="PROSITE" id="PS00028">
    <property type="entry name" value="ZINC_FINGER_C2H2_1"/>
    <property type="match status" value="4"/>
</dbReference>
<dbReference type="PROSITE" id="PS50157">
    <property type="entry name" value="ZINC_FINGER_C2H2_2"/>
    <property type="match status" value="4"/>
</dbReference>
<comment type="function">
    <text evidence="6">Involved in transcriptional regulation. Represses the transcription of a number of genes including gastrin, stromelysin and enolase. Binds to the G-rich box in the enhancer region of these genes.</text>
</comment>
<comment type="subunit">
    <text evidence="2 3">Interacts with HNRNPDL. Interacts with the 5FMC complex; the interaction requires association with CHTOP. Interacts with CAVIN1.</text>
</comment>
<comment type="subcellular location">
    <subcellularLocation>
        <location evidence="6">Nucleus</location>
    </subcellularLocation>
</comment>
<comment type="tissue specificity">
    <text evidence="6">Expressed in heart, lung, kidney, skeletal muscle, liver, brain and spleen.</text>
</comment>
<comment type="PTM">
    <text evidence="1">Sumoylated with SUMO2. Desumoylated by SENP3, resulting in the stimulation of transcription of its target genes (By similarity).</text>
</comment>
<comment type="similarity">
    <text evidence="7">Belongs to the krueppel C2H2-type zinc-finger protein family.</text>
</comment>
<name>ZN148_RAT</name>
<organism>
    <name type="scientific">Rattus norvegicus</name>
    <name type="common">Rat</name>
    <dbReference type="NCBI Taxonomy" id="10116"/>
    <lineage>
        <taxon>Eukaryota</taxon>
        <taxon>Metazoa</taxon>
        <taxon>Chordata</taxon>
        <taxon>Craniata</taxon>
        <taxon>Vertebrata</taxon>
        <taxon>Euteleostomi</taxon>
        <taxon>Mammalia</taxon>
        <taxon>Eutheria</taxon>
        <taxon>Euarchontoglires</taxon>
        <taxon>Glires</taxon>
        <taxon>Rodentia</taxon>
        <taxon>Myomorpha</taxon>
        <taxon>Muroidea</taxon>
        <taxon>Muridae</taxon>
        <taxon>Murinae</taxon>
        <taxon>Rattus</taxon>
    </lineage>
</organism>
<reference key="1">
    <citation type="journal article" date="1996" name="Mol. Cell. Biol.">
        <title>ZBP-89, a Kruppel-like zinc finger protein, inhibits epidermal growth factor induction of the gastrin promoter.</title>
        <authorList>
            <person name="Merchant J.L."/>
            <person name="Iyer G.R."/>
            <person name="Taylor B.R."/>
            <person name="Kitchen J.R."/>
            <person name="Mortensen E.R."/>
            <person name="Wang Z."/>
            <person name="Flintoft R.J."/>
            <person name="Michel J."/>
            <person name="Bassel-Duby R."/>
        </authorList>
    </citation>
    <scope>NUCLEOTIDE SEQUENCE [MRNA]</scope>
    <scope>FUNCTION</scope>
    <scope>SUBCELLULAR LOCATION</scope>
    <scope>TISSUE SPECIFICITY</scope>
    <source>
        <tissue>Pituitary adenoma</tissue>
    </source>
</reference>
<reference key="2">
    <citation type="journal article" date="2012" name="Nat. Commun.">
        <title>Quantitative maps of protein phosphorylation sites across 14 different rat organs and tissues.</title>
        <authorList>
            <person name="Lundby A."/>
            <person name="Secher A."/>
            <person name="Lage K."/>
            <person name="Nordsborg N.B."/>
            <person name="Dmytriyev A."/>
            <person name="Lundby C."/>
            <person name="Olsen J.V."/>
        </authorList>
    </citation>
    <scope>PHOSPHORYLATION [LARGE SCALE ANALYSIS] AT SER-306; SER-412 AND SER-784</scope>
    <scope>IDENTIFICATION BY MASS SPECTROMETRY [LARGE SCALE ANALYSIS]</scope>
</reference>
<gene>
    <name type="primary">Znf148</name>
    <name type="synonym">Zbp89</name>
    <name type="synonym">Zfp148</name>
</gene>
<accession>Q62806</accession>
<protein>
    <recommendedName>
        <fullName>Zinc finger protein 148</fullName>
    </recommendedName>
    <alternativeName>
        <fullName>Transcription factor ZBP-89</fullName>
    </alternativeName>
    <alternativeName>
        <fullName>Zinc finger DNA-binding protein 89</fullName>
    </alternativeName>
</protein>
<proteinExistence type="evidence at protein level"/>
<evidence type="ECO:0000250" key="1"/>
<evidence type="ECO:0000250" key="2">
    <source>
        <dbReference type="UniProtKB" id="Q61624"/>
    </source>
</evidence>
<evidence type="ECO:0000250" key="3">
    <source>
        <dbReference type="UniProtKB" id="Q9UQR1"/>
    </source>
</evidence>
<evidence type="ECO:0000255" key="4">
    <source>
        <dbReference type="PROSITE-ProRule" id="PRU00042"/>
    </source>
</evidence>
<evidence type="ECO:0000256" key="5">
    <source>
        <dbReference type="SAM" id="MobiDB-lite"/>
    </source>
</evidence>
<evidence type="ECO:0000269" key="6">
    <source>
    </source>
</evidence>
<evidence type="ECO:0000305" key="7"/>
<evidence type="ECO:0007744" key="8">
    <source>
    </source>
</evidence>
<keyword id="KW-0007">Acetylation</keyword>
<keyword id="KW-0238">DNA-binding</keyword>
<keyword id="KW-1017">Isopeptide bond</keyword>
<keyword id="KW-0479">Metal-binding</keyword>
<keyword id="KW-0539">Nucleus</keyword>
<keyword id="KW-0597">Phosphoprotein</keyword>
<keyword id="KW-1185">Reference proteome</keyword>
<keyword id="KW-0677">Repeat</keyword>
<keyword id="KW-0678">Repressor</keyword>
<keyword id="KW-0804">Transcription</keyword>
<keyword id="KW-0805">Transcription regulation</keyword>
<keyword id="KW-0832">Ubl conjugation</keyword>
<keyword id="KW-0862">Zinc</keyword>
<keyword id="KW-0863">Zinc-finger</keyword>
<feature type="chain" id="PRO_0000047429" description="Zinc finger protein 148">
    <location>
        <begin position="1"/>
        <end position="794"/>
    </location>
</feature>
<feature type="zinc finger region" description="C2H2-type 1" evidence="4">
    <location>
        <begin position="171"/>
        <end position="193"/>
    </location>
</feature>
<feature type="zinc finger region" description="C2H2-type 2" evidence="4">
    <location>
        <begin position="199"/>
        <end position="221"/>
    </location>
</feature>
<feature type="zinc finger region" description="C2H2-type 3" evidence="4">
    <location>
        <begin position="227"/>
        <end position="249"/>
    </location>
</feature>
<feature type="zinc finger region" description="C2H2-type 4" evidence="4">
    <location>
        <begin position="255"/>
        <end position="278"/>
    </location>
</feature>
<feature type="region of interest" description="Disordered" evidence="5">
    <location>
        <begin position="298"/>
        <end position="346"/>
    </location>
</feature>
<feature type="region of interest" description="Disordered" evidence="5">
    <location>
        <begin position="574"/>
        <end position="596"/>
    </location>
</feature>
<feature type="compositionally biased region" description="Basic and acidic residues" evidence="5">
    <location>
        <begin position="321"/>
        <end position="344"/>
    </location>
</feature>
<feature type="compositionally biased region" description="Polar residues" evidence="5">
    <location>
        <begin position="574"/>
        <end position="588"/>
    </location>
</feature>
<feature type="modified residue" description="Phosphoserine" evidence="2">
    <location>
        <position position="51"/>
    </location>
</feature>
<feature type="modified residue" description="Phosphothreonine" evidence="3">
    <location>
        <position position="194"/>
    </location>
</feature>
<feature type="modified residue" description="Phosphoserine" evidence="3">
    <location>
        <position position="250"/>
    </location>
</feature>
<feature type="modified residue" description="Phosphoserine" evidence="2">
    <location>
        <position position="301"/>
    </location>
</feature>
<feature type="modified residue" description="Phosphoserine" evidence="8">
    <location>
        <position position="306"/>
    </location>
</feature>
<feature type="modified residue" description="Phosphoserine" evidence="8">
    <location>
        <position position="412"/>
    </location>
</feature>
<feature type="modified residue" description="N6-acetyllysine" evidence="3">
    <location>
        <position position="607"/>
    </location>
</feature>
<feature type="modified residue" description="Phosphoserine" evidence="3">
    <location>
        <position position="665"/>
    </location>
</feature>
<feature type="modified residue" description="Phosphoserine" evidence="8">
    <location>
        <position position="784"/>
    </location>
</feature>
<feature type="cross-link" description="Glycyl lysine isopeptide (Lys-Gly) (interchain with G-Cter in SUMO2)" evidence="3">
    <location>
        <position position="6"/>
    </location>
</feature>
<feature type="cross-link" description="Glycyl lysine isopeptide (Lys-Gly) (interchain with G-Cter in SUMO2)" evidence="3">
    <location>
        <position position="88"/>
    </location>
</feature>
<feature type="cross-link" description="Glycyl lysine isopeptide (Lys-Gly) (interchain with G-Cter in SUMO2)" evidence="3">
    <location>
        <position position="115"/>
    </location>
</feature>
<feature type="cross-link" description="Glycyl lysine isopeptide (Lys-Gly) (interchain with G-Cter in SUMO2)" evidence="3">
    <location>
        <position position="132"/>
    </location>
</feature>
<feature type="cross-link" description="Glycyl lysine isopeptide (Lys-Gly) (interchain with G-Cter in SUMO2)" evidence="3">
    <location>
        <position position="291"/>
    </location>
</feature>
<feature type="cross-link" description="Glycyl lysine isopeptide (Lys-Gly) (interchain with G-Cter in SUMO2)" evidence="3">
    <location>
        <position position="308"/>
    </location>
</feature>
<feature type="cross-link" description="Glycyl lysine isopeptide (Lys-Gly) (interchain with G-Cter in SUMO1); alternate" evidence="3">
    <location>
        <position position="356"/>
    </location>
</feature>
<feature type="cross-link" description="Glycyl lysine isopeptide (Lys-Gly) (interchain with G-Cter in SUMO2); alternate" evidence="3">
    <location>
        <position position="356"/>
    </location>
</feature>
<feature type="cross-link" description="Glycyl lysine isopeptide (Lys-Gly) (interchain with G-Cter in SUMO2)" evidence="3">
    <location>
        <position position="402"/>
    </location>
</feature>
<feature type="cross-link" description="Glycyl lysine isopeptide (Lys-Gly) (interchain with G-Cter in SUMO2)" evidence="3">
    <location>
        <position position="421"/>
    </location>
</feature>
<feature type="cross-link" description="Glycyl lysine isopeptide (Lys-Gly) (interchain with G-Cter in SUMO2)" evidence="3">
    <location>
        <position position="424"/>
    </location>
</feature>